<accession>Q9VXH9</accession>
<keyword id="KW-0967">Endosome</keyword>
<keyword id="KW-0653">Protein transport</keyword>
<keyword id="KW-1185">Reference proteome</keyword>
<keyword id="KW-0813">Transport</keyword>
<comment type="function">
    <text evidence="1 3">Acts at least in part as component of the WASH complex which may regulate wash nucleation-promoting factor (NPF) activity and is required for its membrane targeting during endosomal sorting (By similarity). During embryogenesis, not involved in the wash-dependent developmental migration of hemocytes anteriorly from the tail (PubMed:25739458).</text>
</comment>
<comment type="subunit">
    <text evidence="2">Component of the WASH complex.</text>
</comment>
<comment type="subcellular location">
    <subcellularLocation>
        <location evidence="4">Early endosome</location>
    </subcellularLocation>
</comment>
<comment type="similarity">
    <text evidence="4">Belongs to the SWIP family.</text>
</comment>
<organism>
    <name type="scientific">Drosophila melanogaster</name>
    <name type="common">Fruit fly</name>
    <dbReference type="NCBI Taxonomy" id="7227"/>
    <lineage>
        <taxon>Eukaryota</taxon>
        <taxon>Metazoa</taxon>
        <taxon>Ecdysozoa</taxon>
        <taxon>Arthropoda</taxon>
        <taxon>Hexapoda</taxon>
        <taxon>Insecta</taxon>
        <taxon>Pterygota</taxon>
        <taxon>Neoptera</taxon>
        <taxon>Endopterygota</taxon>
        <taxon>Diptera</taxon>
        <taxon>Brachycera</taxon>
        <taxon>Muscomorpha</taxon>
        <taxon>Ephydroidea</taxon>
        <taxon>Drosophilidae</taxon>
        <taxon>Drosophila</taxon>
        <taxon>Sophophora</taxon>
    </lineage>
</organism>
<gene>
    <name evidence="5" type="primary">SWIP</name>
    <name evidence="5" type="ORF">CG13957</name>
</gene>
<protein>
    <recommendedName>
        <fullName evidence="1">WASH complex subunit 4</fullName>
    </recommendedName>
    <alternativeName>
        <fullName evidence="4">Strumpellin and WASH-interacting protein homolog</fullName>
    </alternativeName>
    <alternativeName>
        <fullName>WASH complex subunit SWIP homolog</fullName>
    </alternativeName>
</protein>
<dbReference type="EMBL" id="AE014298">
    <property type="protein sequence ID" value="AAF48588.2"/>
    <property type="molecule type" value="Genomic_DNA"/>
</dbReference>
<dbReference type="RefSeq" id="NP_573116.2">
    <property type="nucleotide sequence ID" value="NM_132888.2"/>
</dbReference>
<dbReference type="BioGRID" id="58934">
    <property type="interactions" value="5"/>
</dbReference>
<dbReference type="ComplexPortal" id="CPX-2562">
    <property type="entry name" value="WASH complex"/>
</dbReference>
<dbReference type="FunCoup" id="Q9VXH9">
    <property type="interactions" value="2091"/>
</dbReference>
<dbReference type="IntAct" id="Q9VXH9">
    <property type="interactions" value="8"/>
</dbReference>
<dbReference type="STRING" id="7227.FBpp0307917"/>
<dbReference type="PaxDb" id="7227-FBpp0074003"/>
<dbReference type="EnsemblMetazoa" id="FBtr0336975">
    <property type="protein sequence ID" value="FBpp0307917"/>
    <property type="gene ID" value="FBgn0030739"/>
</dbReference>
<dbReference type="GeneID" id="32594"/>
<dbReference type="KEGG" id="dme:Dmel_CG13957"/>
<dbReference type="UCSC" id="CG13957-RA">
    <property type="organism name" value="d. melanogaster"/>
</dbReference>
<dbReference type="AGR" id="FB:FBgn0030739"/>
<dbReference type="CTD" id="32594"/>
<dbReference type="FlyBase" id="FBgn0030739">
    <property type="gene designation" value="SWIP"/>
</dbReference>
<dbReference type="VEuPathDB" id="VectorBase:FBgn0030739"/>
<dbReference type="eggNOG" id="KOG3578">
    <property type="taxonomic scope" value="Eukaryota"/>
</dbReference>
<dbReference type="GeneTree" id="ENSGT00390000002524"/>
<dbReference type="HOGENOM" id="CLU_002451_0_0_1"/>
<dbReference type="InParanoid" id="Q9VXH9"/>
<dbReference type="OMA" id="TFLHDEH"/>
<dbReference type="OrthoDB" id="10261210at2759"/>
<dbReference type="BioGRID-ORCS" id="32594">
    <property type="hits" value="0 hits in 1 CRISPR screen"/>
</dbReference>
<dbReference type="GenomeRNAi" id="32594"/>
<dbReference type="PRO" id="PR:Q9VXH9"/>
<dbReference type="Proteomes" id="UP000000803">
    <property type="component" value="Chromosome X"/>
</dbReference>
<dbReference type="Bgee" id="FBgn0030739">
    <property type="expression patterns" value="Expressed in adult class III enteroendocrine cell in adult midgut (Drosophila) and 35 other cell types or tissues"/>
</dbReference>
<dbReference type="GO" id="GO:0005769">
    <property type="term" value="C:early endosome"/>
    <property type="evidence" value="ECO:0007669"/>
    <property type="project" value="UniProtKB-SubCell"/>
</dbReference>
<dbReference type="GO" id="GO:0005768">
    <property type="term" value="C:endosome"/>
    <property type="evidence" value="ECO:0000318"/>
    <property type="project" value="GO_Central"/>
</dbReference>
<dbReference type="GO" id="GO:0005654">
    <property type="term" value="C:nucleoplasm"/>
    <property type="evidence" value="ECO:0000314"/>
    <property type="project" value="FlyBase"/>
</dbReference>
<dbReference type="GO" id="GO:0071203">
    <property type="term" value="C:WASH complex"/>
    <property type="evidence" value="ECO:0000314"/>
    <property type="project" value="UniProtKB"/>
</dbReference>
<dbReference type="GO" id="GO:0016197">
    <property type="term" value="P:endosomal transport"/>
    <property type="evidence" value="ECO:0000250"/>
    <property type="project" value="FlyBase"/>
</dbReference>
<dbReference type="GO" id="GO:0007032">
    <property type="term" value="P:endosome organization"/>
    <property type="evidence" value="ECO:0000250"/>
    <property type="project" value="FlyBase"/>
</dbReference>
<dbReference type="GO" id="GO:0140591">
    <property type="term" value="P:nuclear envelope budding"/>
    <property type="evidence" value="ECO:0000315"/>
    <property type="project" value="FlyBase"/>
</dbReference>
<dbReference type="GO" id="GO:0045785">
    <property type="term" value="P:positive regulation of cell adhesion"/>
    <property type="evidence" value="ECO:0000315"/>
    <property type="project" value="FlyBase"/>
</dbReference>
<dbReference type="GO" id="GO:0015031">
    <property type="term" value="P:protein transport"/>
    <property type="evidence" value="ECO:0007669"/>
    <property type="project" value="UniProtKB-KW"/>
</dbReference>
<dbReference type="InterPro" id="IPR028191">
    <property type="entry name" value="WASH-4_N"/>
</dbReference>
<dbReference type="InterPro" id="IPR028283">
    <property type="entry name" value="WASH-7_C"/>
</dbReference>
<dbReference type="InterPro" id="IPR028282">
    <property type="entry name" value="WASH-7_central"/>
</dbReference>
<dbReference type="InterPro" id="IPR027307">
    <property type="entry name" value="WASH7"/>
</dbReference>
<dbReference type="PANTHER" id="PTHR31409">
    <property type="entry name" value="WASH COMPLEX SUBUNIT 4"/>
    <property type="match status" value="1"/>
</dbReference>
<dbReference type="PANTHER" id="PTHR31409:SF0">
    <property type="entry name" value="WASH COMPLEX SUBUNIT 4"/>
    <property type="match status" value="1"/>
</dbReference>
<dbReference type="Pfam" id="PF14745">
    <property type="entry name" value="WASH-4_N"/>
    <property type="match status" value="1"/>
</dbReference>
<dbReference type="Pfam" id="PF14746">
    <property type="entry name" value="WASH-7_C"/>
    <property type="match status" value="1"/>
</dbReference>
<dbReference type="Pfam" id="PF14744">
    <property type="entry name" value="WASH-7_mid"/>
    <property type="match status" value="1"/>
</dbReference>
<evidence type="ECO:0000250" key="1">
    <source>
        <dbReference type="UniProtKB" id="Q2M389"/>
    </source>
</evidence>
<evidence type="ECO:0000269" key="2">
    <source>
    </source>
</evidence>
<evidence type="ECO:0000269" key="3">
    <source>
    </source>
</evidence>
<evidence type="ECO:0000305" key="4"/>
<evidence type="ECO:0000312" key="5">
    <source>
        <dbReference type="FlyBase" id="FBgn0030739"/>
    </source>
</evidence>
<reference key="1">
    <citation type="journal article" date="2000" name="Science">
        <title>The genome sequence of Drosophila melanogaster.</title>
        <authorList>
            <person name="Adams M.D."/>
            <person name="Celniker S.E."/>
            <person name="Holt R.A."/>
            <person name="Evans C.A."/>
            <person name="Gocayne J.D."/>
            <person name="Amanatides P.G."/>
            <person name="Scherer S.E."/>
            <person name="Li P.W."/>
            <person name="Hoskins R.A."/>
            <person name="Galle R.F."/>
            <person name="George R.A."/>
            <person name="Lewis S.E."/>
            <person name="Richards S."/>
            <person name="Ashburner M."/>
            <person name="Henderson S.N."/>
            <person name="Sutton G.G."/>
            <person name="Wortman J.R."/>
            <person name="Yandell M.D."/>
            <person name="Zhang Q."/>
            <person name="Chen L.X."/>
            <person name="Brandon R.C."/>
            <person name="Rogers Y.-H.C."/>
            <person name="Blazej R.G."/>
            <person name="Champe M."/>
            <person name="Pfeiffer B.D."/>
            <person name="Wan K.H."/>
            <person name="Doyle C."/>
            <person name="Baxter E.G."/>
            <person name="Helt G."/>
            <person name="Nelson C.R."/>
            <person name="Miklos G.L.G."/>
            <person name="Abril J.F."/>
            <person name="Agbayani A."/>
            <person name="An H.-J."/>
            <person name="Andrews-Pfannkoch C."/>
            <person name="Baldwin D."/>
            <person name="Ballew R.M."/>
            <person name="Basu A."/>
            <person name="Baxendale J."/>
            <person name="Bayraktaroglu L."/>
            <person name="Beasley E.M."/>
            <person name="Beeson K.Y."/>
            <person name="Benos P.V."/>
            <person name="Berman B.P."/>
            <person name="Bhandari D."/>
            <person name="Bolshakov S."/>
            <person name="Borkova D."/>
            <person name="Botchan M.R."/>
            <person name="Bouck J."/>
            <person name="Brokstein P."/>
            <person name="Brottier P."/>
            <person name="Burtis K.C."/>
            <person name="Busam D.A."/>
            <person name="Butler H."/>
            <person name="Cadieu E."/>
            <person name="Center A."/>
            <person name="Chandra I."/>
            <person name="Cherry J.M."/>
            <person name="Cawley S."/>
            <person name="Dahlke C."/>
            <person name="Davenport L.B."/>
            <person name="Davies P."/>
            <person name="de Pablos B."/>
            <person name="Delcher A."/>
            <person name="Deng Z."/>
            <person name="Mays A.D."/>
            <person name="Dew I."/>
            <person name="Dietz S.M."/>
            <person name="Dodson K."/>
            <person name="Doup L.E."/>
            <person name="Downes M."/>
            <person name="Dugan-Rocha S."/>
            <person name="Dunkov B.C."/>
            <person name="Dunn P."/>
            <person name="Durbin K.J."/>
            <person name="Evangelista C.C."/>
            <person name="Ferraz C."/>
            <person name="Ferriera S."/>
            <person name="Fleischmann W."/>
            <person name="Fosler C."/>
            <person name="Gabrielian A.E."/>
            <person name="Garg N.S."/>
            <person name="Gelbart W.M."/>
            <person name="Glasser K."/>
            <person name="Glodek A."/>
            <person name="Gong F."/>
            <person name="Gorrell J.H."/>
            <person name="Gu Z."/>
            <person name="Guan P."/>
            <person name="Harris M."/>
            <person name="Harris N.L."/>
            <person name="Harvey D.A."/>
            <person name="Heiman T.J."/>
            <person name="Hernandez J.R."/>
            <person name="Houck J."/>
            <person name="Hostin D."/>
            <person name="Houston K.A."/>
            <person name="Howland T.J."/>
            <person name="Wei M.-H."/>
            <person name="Ibegwam C."/>
            <person name="Jalali M."/>
            <person name="Kalush F."/>
            <person name="Karpen G.H."/>
            <person name="Ke Z."/>
            <person name="Kennison J.A."/>
            <person name="Ketchum K.A."/>
            <person name="Kimmel B.E."/>
            <person name="Kodira C.D."/>
            <person name="Kraft C.L."/>
            <person name="Kravitz S."/>
            <person name="Kulp D."/>
            <person name="Lai Z."/>
            <person name="Lasko P."/>
            <person name="Lei Y."/>
            <person name="Levitsky A.A."/>
            <person name="Li J.H."/>
            <person name="Li Z."/>
            <person name="Liang Y."/>
            <person name="Lin X."/>
            <person name="Liu X."/>
            <person name="Mattei B."/>
            <person name="McIntosh T.C."/>
            <person name="McLeod M.P."/>
            <person name="McPherson D."/>
            <person name="Merkulov G."/>
            <person name="Milshina N.V."/>
            <person name="Mobarry C."/>
            <person name="Morris J."/>
            <person name="Moshrefi A."/>
            <person name="Mount S.M."/>
            <person name="Moy M."/>
            <person name="Murphy B."/>
            <person name="Murphy L."/>
            <person name="Muzny D.M."/>
            <person name="Nelson D.L."/>
            <person name="Nelson D.R."/>
            <person name="Nelson K.A."/>
            <person name="Nixon K."/>
            <person name="Nusskern D.R."/>
            <person name="Pacleb J.M."/>
            <person name="Palazzolo M."/>
            <person name="Pittman G.S."/>
            <person name="Pan S."/>
            <person name="Pollard J."/>
            <person name="Puri V."/>
            <person name="Reese M.G."/>
            <person name="Reinert K."/>
            <person name="Remington K."/>
            <person name="Saunders R.D.C."/>
            <person name="Scheeler F."/>
            <person name="Shen H."/>
            <person name="Shue B.C."/>
            <person name="Siden-Kiamos I."/>
            <person name="Simpson M."/>
            <person name="Skupski M.P."/>
            <person name="Smith T.J."/>
            <person name="Spier E."/>
            <person name="Spradling A.C."/>
            <person name="Stapleton M."/>
            <person name="Strong R."/>
            <person name="Sun E."/>
            <person name="Svirskas R."/>
            <person name="Tector C."/>
            <person name="Turner R."/>
            <person name="Venter E."/>
            <person name="Wang A.H."/>
            <person name="Wang X."/>
            <person name="Wang Z.-Y."/>
            <person name="Wassarman D.A."/>
            <person name="Weinstock G.M."/>
            <person name="Weissenbach J."/>
            <person name="Williams S.M."/>
            <person name="Woodage T."/>
            <person name="Worley K.C."/>
            <person name="Wu D."/>
            <person name="Yang S."/>
            <person name="Yao Q.A."/>
            <person name="Ye J."/>
            <person name="Yeh R.-F."/>
            <person name="Zaveri J.S."/>
            <person name="Zhan M."/>
            <person name="Zhang G."/>
            <person name="Zhao Q."/>
            <person name="Zheng L."/>
            <person name="Zheng X.H."/>
            <person name="Zhong F.N."/>
            <person name="Zhong W."/>
            <person name="Zhou X."/>
            <person name="Zhu S.C."/>
            <person name="Zhu X."/>
            <person name="Smith H.O."/>
            <person name="Gibbs R.A."/>
            <person name="Myers E.W."/>
            <person name="Rubin G.M."/>
            <person name="Venter J.C."/>
        </authorList>
    </citation>
    <scope>NUCLEOTIDE SEQUENCE [LARGE SCALE GENOMIC DNA]</scope>
    <source>
        <strain>Berkeley</strain>
    </source>
</reference>
<reference key="2">
    <citation type="journal article" date="2002" name="Genome Biol.">
        <title>Annotation of the Drosophila melanogaster euchromatic genome: a systematic review.</title>
        <authorList>
            <person name="Misra S."/>
            <person name="Crosby M.A."/>
            <person name="Mungall C.J."/>
            <person name="Matthews B.B."/>
            <person name="Campbell K.S."/>
            <person name="Hradecky P."/>
            <person name="Huang Y."/>
            <person name="Kaminker J.S."/>
            <person name="Millburn G.H."/>
            <person name="Prochnik S.E."/>
            <person name="Smith C.D."/>
            <person name="Tupy J.L."/>
            <person name="Whitfield E.J."/>
            <person name="Bayraktaroglu L."/>
            <person name="Berman B.P."/>
            <person name="Bettencourt B.R."/>
            <person name="Celniker S.E."/>
            <person name="de Grey A.D.N.J."/>
            <person name="Drysdale R.A."/>
            <person name="Harris N.L."/>
            <person name="Richter J."/>
            <person name="Russo S."/>
            <person name="Schroeder A.J."/>
            <person name="Shu S.Q."/>
            <person name="Stapleton M."/>
            <person name="Yamada C."/>
            <person name="Ashburner M."/>
            <person name="Gelbart W.M."/>
            <person name="Rubin G.M."/>
            <person name="Lewis S.E."/>
        </authorList>
    </citation>
    <scope>GENOME REANNOTATION</scope>
    <source>
        <strain>Berkeley</strain>
    </source>
</reference>
<reference key="3">
    <citation type="journal article" date="2010" name="Proc. Natl. Acad. Sci. U.S.A.">
        <title>WASH and WAVE actin regulators of the Wiskott-Aldrich syndrome protein (WASP) family are controlled by analogous structurally related complexes.</title>
        <authorList>
            <person name="Jia D."/>
            <person name="Gomez T.S."/>
            <person name="Metlagel Z."/>
            <person name="Umetani J."/>
            <person name="Otwinowski Z."/>
            <person name="Rosen M.K."/>
            <person name="Billadeau D.D."/>
        </authorList>
    </citation>
    <scope>SUBUNIT</scope>
</reference>
<reference key="4">
    <citation type="journal article" date="2015" name="Mol. Biol. Cell">
        <title>Wash functions downstream of Rho1 GTPase in a subset of Drosophila immune cell developmental migrations.</title>
        <authorList>
            <person name="Verboon J.M."/>
            <person name="Rahe T.K."/>
            <person name="Rodriguez-Mesa E."/>
            <person name="Parkhurst S.M."/>
        </authorList>
    </citation>
    <scope>FUNCTION</scope>
</reference>
<sequence>MFAEDILRDYGSFISEHDGKLKLLRDKVPNRDVSESAQCVYMSPVVEVNFMGNDSMAPDRSFEESELVANKPLTTLANLCNQCRNLSRKAKRFQLAFLFSDFRLDDTLPPHTHTSEGSAGLEGSLVRMSSSMDFFCQVYFLLNRMIVILQNLWRQIAASVSVPMDINEVHIFAVFDAMSELLEHIVVFNELANQSKISTMWALYKKWLMNLSNSQSANLELNGLSTSLMDIENLITKDFFRILLDNLMELKKQFGLNSVSPITQHSNAYIRRQLLDVDANPSNELKNYEDPKHIIRLTTFVVVVHELGIQMEGKLVKNVIDLVARHKQVPLNRSVFWSPSGFLSLHAKTLMKSSARSQDGQGPKVHSTVLEKFRLSDQRTCRQLGVQLSLWSIQMQRVFDVGVFGHLKTFLQLILNGHSYADQVNLLAVALINRHVALMTPMTRNDWIVVSRLLQYLKVIQKTFESNQINFVRFISSLIQWQKQKVIHLLHTTKKKIVVLKLLQRKINFLATIKLAEKSIMGFPSKQRLTFVNLALGEFLDNRLLPADNQKLIKSILHRVNSISDIMRNIGGQLNTSESSSLVYNHWFLDTSVLKEYTELQRNPYSLQNLVSVSHHLDKIMAMFRGSRCPKQSANDLIIEFLSNHLEFFLRVEALSHLFQSQDQPFQQSALDYRLCINAVAVENDGDYNIIKDHLENYFTATFYNLTTIAPHDWKSYEKMRHLANKVLQLQPIDDHLPNQIIDQGIDVLQIMRNIHTFASSYAYNMNLQVFVETNSRSKHLDIIGTRHVANSVQTHGTGIINTTVNFIYQFLRQKFYTFSTFLHDEQIKSRLLKELRFHTEHKHSKSYQSYPYERADSFLKKIRRLGCSSNGETYMDLFRKVITQVGNAVGYVRLLQAGSKNANFRNRSYKTRFDSNFSCGGSKVHEATEGSIREYEKSLGHMKECYSDSTNYFKLLLQGFQPFLCNPHNHHLRTFYLITPALIMNYIDYRVKQKLKIYKKDQTKISLFEDGFAIGLVYILNMLNQQTEFHELGWSQTITQHLNAERSKVRDILAGQQRTAPEQLDEKLHQTVAITERHVNAYEHEYNLLYATLSSSEIFFQ</sequence>
<feature type="chain" id="PRO_0000390960" description="WASH complex subunit 4">
    <location>
        <begin position="1"/>
        <end position="1102"/>
    </location>
</feature>
<name>WASC4_DROME</name>
<proteinExistence type="evidence at protein level"/>